<feature type="signal peptide" evidence="1">
    <location>
        <begin position="1"/>
        <end position="29"/>
    </location>
</feature>
<feature type="chain" id="PRO_0000270015" description="Chaperone SurA">
    <location>
        <begin position="30"/>
        <end position="434"/>
    </location>
</feature>
<feature type="domain" description="PpiC 1" evidence="1">
    <location>
        <begin position="180"/>
        <end position="281"/>
    </location>
</feature>
<feature type="domain" description="PpiC 2" evidence="1">
    <location>
        <begin position="290"/>
        <end position="389"/>
    </location>
</feature>
<sequence length="434" mass="48831">MKTLRLNFRSAILKALGALLLLQGCLAHAQVQELDRVVAVVNDDIVLYSELQDRASRIKDKLRQQKTPLPPEAVLHEKVLDQLVLESIQMQMADRGGIRVSDSQLNQTMQNIAKQNGMTLDQFQQALSEEGVTYQSAREQIRREMIISRVQQRSVDSRVRVTEKEVNDFLKSASAKEQRAEEYHLAHILIALPENPSDAQRKEAESKVEKIRSQLDQGVDFKQLAITYSDASTATQGGDLGWRKPDQVPSLFADVAPKLAPGQTSEPIRNSSGVHFVAMLEKRGGVSKVVEQSKVRHILVQQNELRDEIAAKKLIEEIYGKVQAGEDFAELAKAYSDDAVSAAAGGSLDWVNPGDMVPEFDQMMRETPVGAVSKPFQSTFGWHILQVQDRREADIGDRLMASQARQVLHRRKYEEELQNWLSEIRDEAFVQLKL</sequence>
<reference key="1">
    <citation type="journal article" date="2005" name="Nucleic Acids Res.">
        <title>Genomic blueprint of Hahella chejuensis, a marine microbe producing an algicidal agent.</title>
        <authorList>
            <person name="Jeong H."/>
            <person name="Yim J.H."/>
            <person name="Lee C."/>
            <person name="Choi S.-H."/>
            <person name="Park Y.K."/>
            <person name="Yoon S.H."/>
            <person name="Hur C.-G."/>
            <person name="Kang H.-Y."/>
            <person name="Kim D."/>
            <person name="Lee H.H."/>
            <person name="Park K.H."/>
            <person name="Park S.-H."/>
            <person name="Park H.-S."/>
            <person name="Lee H.K."/>
            <person name="Oh T.K."/>
            <person name="Kim J.F."/>
        </authorList>
    </citation>
    <scope>NUCLEOTIDE SEQUENCE [LARGE SCALE GENOMIC DNA]</scope>
    <source>
        <strain>KCTC 2396</strain>
    </source>
</reference>
<accession>Q2S9C1</accession>
<protein>
    <recommendedName>
        <fullName evidence="1">Chaperone SurA</fullName>
    </recommendedName>
    <alternativeName>
        <fullName evidence="1">Peptidyl-prolyl cis-trans isomerase SurA</fullName>
        <shortName evidence="1">PPIase SurA</shortName>
        <ecNumber evidence="1">5.2.1.8</ecNumber>
    </alternativeName>
    <alternativeName>
        <fullName evidence="1">Rotamase SurA</fullName>
    </alternativeName>
</protein>
<keyword id="KW-0143">Chaperone</keyword>
<keyword id="KW-0413">Isomerase</keyword>
<keyword id="KW-0574">Periplasm</keyword>
<keyword id="KW-1185">Reference proteome</keyword>
<keyword id="KW-0677">Repeat</keyword>
<keyword id="KW-0697">Rotamase</keyword>
<keyword id="KW-0732">Signal</keyword>
<comment type="function">
    <text evidence="1">Chaperone involved in the correct folding and assembly of outer membrane proteins. Recognizes specific patterns of aromatic residues and the orientation of their side chains, which are found more frequently in integral outer membrane proteins. May act in both early periplasmic and late outer membrane-associated steps of protein maturation.</text>
</comment>
<comment type="catalytic activity">
    <reaction evidence="1">
        <text>[protein]-peptidylproline (omega=180) = [protein]-peptidylproline (omega=0)</text>
        <dbReference type="Rhea" id="RHEA:16237"/>
        <dbReference type="Rhea" id="RHEA-COMP:10747"/>
        <dbReference type="Rhea" id="RHEA-COMP:10748"/>
        <dbReference type="ChEBI" id="CHEBI:83833"/>
        <dbReference type="ChEBI" id="CHEBI:83834"/>
        <dbReference type="EC" id="5.2.1.8"/>
    </reaction>
</comment>
<comment type="subcellular location">
    <subcellularLocation>
        <location evidence="1">Periplasm</location>
    </subcellularLocation>
    <text evidence="1">Is capable of associating with the outer membrane.</text>
</comment>
<comment type="domain">
    <text evidence="1">The PPIase activity resides only in the second parvulin domain. The N-terminal region and the C-terminal tail are necessary and sufficient for the chaperone activity of SurA. The PPIase activity is dispensable for SurA to function as a chaperone. The N-terminal region and the C-terminal tail are also required for porin recognition.</text>
</comment>
<gene>
    <name evidence="1" type="primary">surA</name>
    <name type="ordered locus">HCH_06105</name>
</gene>
<evidence type="ECO:0000255" key="1">
    <source>
        <dbReference type="HAMAP-Rule" id="MF_01183"/>
    </source>
</evidence>
<dbReference type="EC" id="5.2.1.8" evidence="1"/>
<dbReference type="EMBL" id="CP000155">
    <property type="protein sequence ID" value="ABC32753.1"/>
    <property type="molecule type" value="Genomic_DNA"/>
</dbReference>
<dbReference type="RefSeq" id="WP_011399811.1">
    <property type="nucleotide sequence ID" value="NC_007645.1"/>
</dbReference>
<dbReference type="SMR" id="Q2S9C1"/>
<dbReference type="STRING" id="349521.HCH_06105"/>
<dbReference type="KEGG" id="hch:HCH_06105"/>
<dbReference type="eggNOG" id="COG0760">
    <property type="taxonomic scope" value="Bacteria"/>
</dbReference>
<dbReference type="HOGENOM" id="CLU_034646_11_0_6"/>
<dbReference type="OrthoDB" id="14196at2"/>
<dbReference type="Proteomes" id="UP000000238">
    <property type="component" value="Chromosome"/>
</dbReference>
<dbReference type="GO" id="GO:0030288">
    <property type="term" value="C:outer membrane-bounded periplasmic space"/>
    <property type="evidence" value="ECO:0007669"/>
    <property type="project" value="InterPro"/>
</dbReference>
<dbReference type="GO" id="GO:0042277">
    <property type="term" value="F:peptide binding"/>
    <property type="evidence" value="ECO:0007669"/>
    <property type="project" value="InterPro"/>
</dbReference>
<dbReference type="GO" id="GO:0003755">
    <property type="term" value="F:peptidyl-prolyl cis-trans isomerase activity"/>
    <property type="evidence" value="ECO:0007669"/>
    <property type="project" value="UniProtKB-UniRule"/>
</dbReference>
<dbReference type="GO" id="GO:0051082">
    <property type="term" value="F:unfolded protein binding"/>
    <property type="evidence" value="ECO:0007669"/>
    <property type="project" value="UniProtKB-UniRule"/>
</dbReference>
<dbReference type="GO" id="GO:0043165">
    <property type="term" value="P:Gram-negative-bacterium-type cell outer membrane assembly"/>
    <property type="evidence" value="ECO:0007669"/>
    <property type="project" value="InterPro"/>
</dbReference>
<dbReference type="GO" id="GO:0006457">
    <property type="term" value="P:protein folding"/>
    <property type="evidence" value="ECO:0007669"/>
    <property type="project" value="UniProtKB-UniRule"/>
</dbReference>
<dbReference type="GO" id="GO:0050821">
    <property type="term" value="P:protein stabilization"/>
    <property type="evidence" value="ECO:0007669"/>
    <property type="project" value="InterPro"/>
</dbReference>
<dbReference type="Gene3D" id="3.10.50.40">
    <property type="match status" value="2"/>
</dbReference>
<dbReference type="Gene3D" id="1.10.4030.10">
    <property type="entry name" value="Porin chaperone SurA, peptide-binding domain"/>
    <property type="match status" value="1"/>
</dbReference>
<dbReference type="HAMAP" id="MF_01183">
    <property type="entry name" value="Chaperone_SurA"/>
    <property type="match status" value="1"/>
</dbReference>
<dbReference type="InterPro" id="IPR050280">
    <property type="entry name" value="OMP_Chaperone_SurA"/>
</dbReference>
<dbReference type="InterPro" id="IPR046357">
    <property type="entry name" value="PPIase_dom_sf"/>
</dbReference>
<dbReference type="InterPro" id="IPR000297">
    <property type="entry name" value="PPIase_PpiC"/>
</dbReference>
<dbReference type="InterPro" id="IPR023034">
    <property type="entry name" value="PPIase_SurA"/>
</dbReference>
<dbReference type="InterPro" id="IPR015391">
    <property type="entry name" value="SurA_N"/>
</dbReference>
<dbReference type="InterPro" id="IPR027304">
    <property type="entry name" value="Trigger_fact/SurA_dom_sf"/>
</dbReference>
<dbReference type="PANTHER" id="PTHR47637">
    <property type="entry name" value="CHAPERONE SURA"/>
    <property type="match status" value="1"/>
</dbReference>
<dbReference type="PANTHER" id="PTHR47637:SF1">
    <property type="entry name" value="CHAPERONE SURA"/>
    <property type="match status" value="1"/>
</dbReference>
<dbReference type="Pfam" id="PF00639">
    <property type="entry name" value="Rotamase"/>
    <property type="match status" value="1"/>
</dbReference>
<dbReference type="Pfam" id="PF13616">
    <property type="entry name" value="Rotamase_3"/>
    <property type="match status" value="1"/>
</dbReference>
<dbReference type="Pfam" id="PF09312">
    <property type="entry name" value="SurA_N"/>
    <property type="match status" value="1"/>
</dbReference>
<dbReference type="SUPFAM" id="SSF54534">
    <property type="entry name" value="FKBP-like"/>
    <property type="match status" value="2"/>
</dbReference>
<dbReference type="SUPFAM" id="SSF109998">
    <property type="entry name" value="Triger factor/SurA peptide-binding domain-like"/>
    <property type="match status" value="1"/>
</dbReference>
<dbReference type="PROSITE" id="PS50198">
    <property type="entry name" value="PPIC_PPIASE_2"/>
    <property type="match status" value="2"/>
</dbReference>
<name>SURA_HAHCH</name>
<proteinExistence type="inferred from homology"/>
<organism>
    <name type="scientific">Hahella chejuensis (strain KCTC 2396)</name>
    <dbReference type="NCBI Taxonomy" id="349521"/>
    <lineage>
        <taxon>Bacteria</taxon>
        <taxon>Pseudomonadati</taxon>
        <taxon>Pseudomonadota</taxon>
        <taxon>Gammaproteobacteria</taxon>
        <taxon>Oceanospirillales</taxon>
        <taxon>Hahellaceae</taxon>
        <taxon>Hahella</taxon>
    </lineage>
</organism>